<keyword id="KW-1185">Reference proteome</keyword>
<keyword id="KW-0687">Ribonucleoprotein</keyword>
<keyword id="KW-0689">Ribosomal protein</keyword>
<keyword id="KW-0694">RNA-binding</keyword>
<keyword id="KW-0699">rRNA-binding</keyword>
<comment type="function">
    <text evidence="1">This is one of the proteins that bind and probably mediate the attachment of the 5S RNA into the large ribosomal subunit, where it forms part of the central protuberance.</text>
</comment>
<comment type="subunit">
    <text evidence="1">Part of the 50S ribosomal subunit; part of the 5S rRNA/L5/L18/L25 subcomplex. Contacts the 5S and 23S rRNAs.</text>
</comment>
<comment type="similarity">
    <text evidence="1">Belongs to the universal ribosomal protein uL18 family.</text>
</comment>
<dbReference type="EMBL" id="CP000143">
    <property type="protein sequence ID" value="ABA77878.1"/>
    <property type="molecule type" value="Genomic_DNA"/>
</dbReference>
<dbReference type="RefSeq" id="WP_002722520.1">
    <property type="nucleotide sequence ID" value="NZ_CP030271.1"/>
</dbReference>
<dbReference type="RefSeq" id="YP_351779.1">
    <property type="nucleotide sequence ID" value="NC_007493.2"/>
</dbReference>
<dbReference type="SMR" id="Q3J5Q6"/>
<dbReference type="STRING" id="272943.RSP_1731"/>
<dbReference type="EnsemblBacteria" id="ABA77878">
    <property type="protein sequence ID" value="ABA77878"/>
    <property type="gene ID" value="RSP_1731"/>
</dbReference>
<dbReference type="GeneID" id="67445516"/>
<dbReference type="KEGG" id="rsp:RSP_1731"/>
<dbReference type="PATRIC" id="fig|272943.9.peg.609"/>
<dbReference type="eggNOG" id="COG0256">
    <property type="taxonomic scope" value="Bacteria"/>
</dbReference>
<dbReference type="OrthoDB" id="9810939at2"/>
<dbReference type="PhylomeDB" id="Q3J5Q6"/>
<dbReference type="Proteomes" id="UP000002703">
    <property type="component" value="Chromosome 1"/>
</dbReference>
<dbReference type="GO" id="GO:0022625">
    <property type="term" value="C:cytosolic large ribosomal subunit"/>
    <property type="evidence" value="ECO:0007669"/>
    <property type="project" value="TreeGrafter"/>
</dbReference>
<dbReference type="GO" id="GO:0008097">
    <property type="term" value="F:5S rRNA binding"/>
    <property type="evidence" value="ECO:0007669"/>
    <property type="project" value="TreeGrafter"/>
</dbReference>
<dbReference type="GO" id="GO:0003735">
    <property type="term" value="F:structural constituent of ribosome"/>
    <property type="evidence" value="ECO:0007669"/>
    <property type="project" value="InterPro"/>
</dbReference>
<dbReference type="GO" id="GO:0006412">
    <property type="term" value="P:translation"/>
    <property type="evidence" value="ECO:0007669"/>
    <property type="project" value="UniProtKB-UniRule"/>
</dbReference>
<dbReference type="CDD" id="cd00432">
    <property type="entry name" value="Ribosomal_L18_L5e"/>
    <property type="match status" value="1"/>
</dbReference>
<dbReference type="FunFam" id="3.30.420.100:FF:000001">
    <property type="entry name" value="50S ribosomal protein L18"/>
    <property type="match status" value="1"/>
</dbReference>
<dbReference type="Gene3D" id="3.30.420.100">
    <property type="match status" value="1"/>
</dbReference>
<dbReference type="HAMAP" id="MF_01337_B">
    <property type="entry name" value="Ribosomal_uL18_B"/>
    <property type="match status" value="1"/>
</dbReference>
<dbReference type="InterPro" id="IPR004389">
    <property type="entry name" value="Ribosomal_uL18_bac-type"/>
</dbReference>
<dbReference type="InterPro" id="IPR005484">
    <property type="entry name" value="Ribosomal_uL18_bac/euk"/>
</dbReference>
<dbReference type="NCBIfam" id="TIGR00060">
    <property type="entry name" value="L18_bact"/>
    <property type="match status" value="1"/>
</dbReference>
<dbReference type="PANTHER" id="PTHR12899">
    <property type="entry name" value="39S RIBOSOMAL PROTEIN L18, MITOCHONDRIAL"/>
    <property type="match status" value="1"/>
</dbReference>
<dbReference type="PANTHER" id="PTHR12899:SF3">
    <property type="entry name" value="LARGE RIBOSOMAL SUBUNIT PROTEIN UL18M"/>
    <property type="match status" value="1"/>
</dbReference>
<dbReference type="Pfam" id="PF00861">
    <property type="entry name" value="Ribosomal_L18p"/>
    <property type="match status" value="1"/>
</dbReference>
<dbReference type="SUPFAM" id="SSF53137">
    <property type="entry name" value="Translational machinery components"/>
    <property type="match status" value="1"/>
</dbReference>
<proteinExistence type="inferred from homology"/>
<protein>
    <recommendedName>
        <fullName evidence="1">Large ribosomal subunit protein uL18</fullName>
    </recommendedName>
    <alternativeName>
        <fullName evidence="2">50S ribosomal protein L18</fullName>
    </alternativeName>
</protein>
<evidence type="ECO:0000255" key="1">
    <source>
        <dbReference type="HAMAP-Rule" id="MF_01337"/>
    </source>
</evidence>
<evidence type="ECO:0000305" key="2"/>
<feature type="chain" id="PRO_0000251355" description="Large ribosomal subunit protein uL18">
    <location>
        <begin position="1"/>
        <end position="119"/>
    </location>
</feature>
<accession>Q3J5Q6</accession>
<name>RL18_CERS4</name>
<reference key="1">
    <citation type="submission" date="2005-09" db="EMBL/GenBank/DDBJ databases">
        <title>Complete sequence of chromosome 1 of Rhodobacter sphaeroides 2.4.1.</title>
        <authorList>
            <person name="Copeland A."/>
            <person name="Lucas S."/>
            <person name="Lapidus A."/>
            <person name="Barry K."/>
            <person name="Detter J.C."/>
            <person name="Glavina T."/>
            <person name="Hammon N."/>
            <person name="Israni S."/>
            <person name="Pitluck S."/>
            <person name="Richardson P."/>
            <person name="Mackenzie C."/>
            <person name="Choudhary M."/>
            <person name="Larimer F."/>
            <person name="Hauser L.J."/>
            <person name="Land M."/>
            <person name="Donohue T.J."/>
            <person name="Kaplan S."/>
        </authorList>
    </citation>
    <scope>NUCLEOTIDE SEQUENCE [LARGE SCALE GENOMIC DNA]</scope>
    <source>
        <strain>ATCC 17023 / DSM 158 / JCM 6121 / CCUG 31486 / LMG 2827 / NBRC 12203 / NCIMB 8253 / ATH 2.4.1.</strain>
    </source>
</reference>
<sequence length="119" mass="12783">MANTKRELFLKRRLRVRNKLKASANGRLRLSVHRSSKNISAQLIDDANGVTLAAASTLEKGLGFVGKNNVEASAAVGRAIAERAKAAGIEECFFDRGGFLFHGKIKALADAAREGGLKF</sequence>
<organism>
    <name type="scientific">Cereibacter sphaeroides (strain ATCC 17023 / DSM 158 / JCM 6121 / CCUG 31486 / LMG 2827 / NBRC 12203 / NCIMB 8253 / ATH 2.4.1.)</name>
    <name type="common">Rhodobacter sphaeroides</name>
    <dbReference type="NCBI Taxonomy" id="272943"/>
    <lineage>
        <taxon>Bacteria</taxon>
        <taxon>Pseudomonadati</taxon>
        <taxon>Pseudomonadota</taxon>
        <taxon>Alphaproteobacteria</taxon>
        <taxon>Rhodobacterales</taxon>
        <taxon>Paracoccaceae</taxon>
        <taxon>Cereibacter</taxon>
    </lineage>
</organism>
<gene>
    <name evidence="1" type="primary">rplR</name>
    <name type="ordered locus">RHOS4_03100</name>
    <name type="ORF">RSP_1731</name>
</gene>